<proteinExistence type="inferred from homology"/>
<evidence type="ECO:0000255" key="1">
    <source>
        <dbReference type="HAMAP-Rule" id="MF_00226"/>
    </source>
</evidence>
<dbReference type="EMBL" id="CP000485">
    <property type="protein sequence ID" value="ABK86645.1"/>
    <property type="molecule type" value="Genomic_DNA"/>
</dbReference>
<dbReference type="RefSeq" id="WP_000990731.1">
    <property type="nucleotide sequence ID" value="NC_008600.1"/>
</dbReference>
<dbReference type="SMR" id="A0RHF2"/>
<dbReference type="KEGG" id="btl:BALH_3408"/>
<dbReference type="HOGENOM" id="CLU_030805_9_3_9"/>
<dbReference type="CDD" id="cd00885">
    <property type="entry name" value="cinA"/>
    <property type="match status" value="1"/>
</dbReference>
<dbReference type="Gene3D" id="3.30.70.2860">
    <property type="match status" value="1"/>
</dbReference>
<dbReference type="Gene3D" id="3.90.950.20">
    <property type="entry name" value="CinA-like"/>
    <property type="match status" value="1"/>
</dbReference>
<dbReference type="Gene3D" id="3.40.980.10">
    <property type="entry name" value="MoaB/Mog-like domain"/>
    <property type="match status" value="1"/>
</dbReference>
<dbReference type="HAMAP" id="MF_00226_B">
    <property type="entry name" value="CinA_B"/>
    <property type="match status" value="1"/>
</dbReference>
<dbReference type="InterPro" id="IPR050101">
    <property type="entry name" value="CinA"/>
</dbReference>
<dbReference type="InterPro" id="IPR036653">
    <property type="entry name" value="CinA-like_C"/>
</dbReference>
<dbReference type="InterPro" id="IPR008136">
    <property type="entry name" value="CinA_C"/>
</dbReference>
<dbReference type="InterPro" id="IPR041424">
    <property type="entry name" value="CinA_KH"/>
</dbReference>
<dbReference type="InterPro" id="IPR008135">
    <property type="entry name" value="Competence-induced_CinA"/>
</dbReference>
<dbReference type="InterPro" id="IPR036425">
    <property type="entry name" value="MoaB/Mog-like_dom_sf"/>
</dbReference>
<dbReference type="InterPro" id="IPR001453">
    <property type="entry name" value="MoaB/Mog_dom"/>
</dbReference>
<dbReference type="NCBIfam" id="TIGR00200">
    <property type="entry name" value="cinA_nterm"/>
    <property type="match status" value="1"/>
</dbReference>
<dbReference type="NCBIfam" id="TIGR00177">
    <property type="entry name" value="molyb_syn"/>
    <property type="match status" value="1"/>
</dbReference>
<dbReference type="NCBIfam" id="TIGR00199">
    <property type="entry name" value="PncC_domain"/>
    <property type="match status" value="1"/>
</dbReference>
<dbReference type="NCBIfam" id="NF001813">
    <property type="entry name" value="PRK00549.1"/>
    <property type="match status" value="1"/>
</dbReference>
<dbReference type="PANTHER" id="PTHR13939">
    <property type="entry name" value="NICOTINAMIDE-NUCLEOTIDE AMIDOHYDROLASE PNCC"/>
    <property type="match status" value="1"/>
</dbReference>
<dbReference type="PANTHER" id="PTHR13939:SF0">
    <property type="entry name" value="NMN AMIDOHYDROLASE-LIKE PROTEIN YFAY"/>
    <property type="match status" value="1"/>
</dbReference>
<dbReference type="Pfam" id="PF02464">
    <property type="entry name" value="CinA"/>
    <property type="match status" value="1"/>
</dbReference>
<dbReference type="Pfam" id="PF18146">
    <property type="entry name" value="CinA_KH"/>
    <property type="match status" value="1"/>
</dbReference>
<dbReference type="Pfam" id="PF00994">
    <property type="entry name" value="MoCF_biosynth"/>
    <property type="match status" value="1"/>
</dbReference>
<dbReference type="PIRSF" id="PIRSF006728">
    <property type="entry name" value="CinA"/>
    <property type="match status" value="1"/>
</dbReference>
<dbReference type="SMART" id="SM00852">
    <property type="entry name" value="MoCF_biosynth"/>
    <property type="match status" value="1"/>
</dbReference>
<dbReference type="SUPFAM" id="SSF142433">
    <property type="entry name" value="CinA-like"/>
    <property type="match status" value="1"/>
</dbReference>
<dbReference type="SUPFAM" id="SSF53218">
    <property type="entry name" value="Molybdenum cofactor biosynthesis proteins"/>
    <property type="match status" value="1"/>
</dbReference>
<comment type="similarity">
    <text evidence="1">Belongs to the CinA family.</text>
</comment>
<protein>
    <recommendedName>
        <fullName evidence="1">Putative competence-damage inducible protein</fullName>
    </recommendedName>
</protein>
<gene>
    <name evidence="1" type="primary">cinA</name>
    <name type="ordered locus">BALH_3408</name>
</gene>
<reference key="1">
    <citation type="journal article" date="2007" name="J. Bacteriol.">
        <title>The complete genome sequence of Bacillus thuringiensis Al Hakam.</title>
        <authorList>
            <person name="Challacombe J.F."/>
            <person name="Altherr M.R."/>
            <person name="Xie G."/>
            <person name="Bhotika S.S."/>
            <person name="Brown N."/>
            <person name="Bruce D."/>
            <person name="Campbell C.S."/>
            <person name="Campbell M.L."/>
            <person name="Chen J."/>
            <person name="Chertkov O."/>
            <person name="Cleland C."/>
            <person name="Dimitrijevic M."/>
            <person name="Doggett N.A."/>
            <person name="Fawcett J.J."/>
            <person name="Glavina T."/>
            <person name="Goodwin L.A."/>
            <person name="Green L.D."/>
            <person name="Han C.S."/>
            <person name="Hill K.K."/>
            <person name="Hitchcock P."/>
            <person name="Jackson P.J."/>
            <person name="Keim P."/>
            <person name="Kewalramani A.R."/>
            <person name="Longmire J."/>
            <person name="Lucas S."/>
            <person name="Malfatti S."/>
            <person name="Martinez D."/>
            <person name="McMurry K."/>
            <person name="Meincke L.J."/>
            <person name="Misra M."/>
            <person name="Moseman B.L."/>
            <person name="Mundt M."/>
            <person name="Munk A.C."/>
            <person name="Okinaka R.T."/>
            <person name="Parson-Quintana B."/>
            <person name="Reilly L.P."/>
            <person name="Richardson P."/>
            <person name="Robinson D.L."/>
            <person name="Saunders E."/>
            <person name="Tapia R."/>
            <person name="Tesmer J.G."/>
            <person name="Thayer N."/>
            <person name="Thompson L.S."/>
            <person name="Tice H."/>
            <person name="Ticknor L.O."/>
            <person name="Wills P.L."/>
            <person name="Gilna P."/>
            <person name="Brettin T.S."/>
        </authorList>
    </citation>
    <scope>NUCLEOTIDE SEQUENCE [LARGE SCALE GENOMIC DNA]</scope>
    <source>
        <strain>Al Hakam</strain>
    </source>
</reference>
<name>CINA_BACAH</name>
<sequence>MNAEIIAVGTELLLGQIANTNAQFLSEKLASIGINVYYHTVVGDNNKRLQQAIEVAEGRADMLIFTGGLGPTKDDLTKETIASSLAEELVYDEKALASISDYFKRTGREFTENNKKQALVLDGATVFANDHGMAPGMGLNKNGKVYILLPGPPKEMKPMYVSYVEPFLRNFTTGENIYSRVLRFFGIGESQLEVKVQDLIDGQTNPTIAPLANDGEVTLRLTAKHQNVDEAEKLIQHVEDLILERVGEFFYGYDQEFLHDKAIELLKKKGLTLSCAESLTGGLFGNQVTESAGVSSVFKGGVICYHNDVKQHVLHVPEEVLFTDGAVSKECARYLAENVKELLEADIGISFTGVAGPDASEHKEPGTVFVGLAIKDEPTVVFPLNLSGSRQQIRERSAKYGFYHLYKKLEEI</sequence>
<organism>
    <name type="scientific">Bacillus thuringiensis (strain Al Hakam)</name>
    <dbReference type="NCBI Taxonomy" id="412694"/>
    <lineage>
        <taxon>Bacteria</taxon>
        <taxon>Bacillati</taxon>
        <taxon>Bacillota</taxon>
        <taxon>Bacilli</taxon>
        <taxon>Bacillales</taxon>
        <taxon>Bacillaceae</taxon>
        <taxon>Bacillus</taxon>
        <taxon>Bacillus cereus group</taxon>
    </lineage>
</organism>
<feature type="chain" id="PRO_1000058693" description="Putative competence-damage inducible protein">
    <location>
        <begin position="1"/>
        <end position="412"/>
    </location>
</feature>
<accession>A0RHF2</accession>